<accession>Q6ISS4</accession>
<accession>Q6PEZ4</accession>
<proteinExistence type="evidence at protein level"/>
<dbReference type="EMBL" id="AF013250">
    <property type="protein sequence ID" value="AAB69325.1"/>
    <property type="molecule type" value="mRNA"/>
</dbReference>
<dbReference type="EMBL" id="AA133246">
    <property type="status" value="NOT_ANNOTATED_CDS"/>
    <property type="molecule type" value="mRNA"/>
</dbReference>
<dbReference type="EMBL" id="BC069366">
    <property type="protein sequence ID" value="AAH69366.1"/>
    <property type="molecule type" value="mRNA"/>
</dbReference>
<dbReference type="CCDS" id="CCDS12897.1">
    <molecule id="Q6ISS4-1"/>
</dbReference>
<dbReference type="CCDS" id="CCDS12898.1">
    <molecule id="Q6ISS4-2"/>
</dbReference>
<dbReference type="RefSeq" id="NP_002279.2">
    <molecule id="Q6ISS4-1"/>
    <property type="nucleotide sequence ID" value="NM_002288.5"/>
</dbReference>
<dbReference type="RefSeq" id="NP_067154.1">
    <molecule id="Q6ISS4-2"/>
    <property type="nucleotide sequence ID" value="NM_021270.5"/>
</dbReference>
<dbReference type="SMR" id="Q6ISS4"/>
<dbReference type="BioGRID" id="110099">
    <property type="interactions" value="50"/>
</dbReference>
<dbReference type="FunCoup" id="Q6ISS4">
    <property type="interactions" value="7"/>
</dbReference>
<dbReference type="IntAct" id="Q6ISS4">
    <property type="interactions" value="47"/>
</dbReference>
<dbReference type="STRING" id="9606.ENSP00000301202"/>
<dbReference type="iPTMnet" id="Q6ISS4"/>
<dbReference type="PhosphoSitePlus" id="Q6ISS4"/>
<dbReference type="BioMuta" id="LAIR2"/>
<dbReference type="DMDM" id="74736630"/>
<dbReference type="MassIVE" id="Q6ISS4"/>
<dbReference type="PaxDb" id="9606-ENSP00000301202"/>
<dbReference type="PeptideAtlas" id="Q6ISS4"/>
<dbReference type="ProteomicsDB" id="66494">
    <molecule id="Q6ISS4-1"/>
</dbReference>
<dbReference type="ProteomicsDB" id="66495">
    <molecule id="Q6ISS4-2"/>
</dbReference>
<dbReference type="Antibodypedia" id="32926">
    <property type="antibodies" value="208 antibodies from 24 providers"/>
</dbReference>
<dbReference type="DNASU" id="3904"/>
<dbReference type="Ensembl" id="ENST00000301202.7">
    <molecule id="Q6ISS4-1"/>
    <property type="protein sequence ID" value="ENSP00000301202.2"/>
    <property type="gene ID" value="ENSG00000167618.10"/>
</dbReference>
<dbReference type="Ensembl" id="ENST00000351841.2">
    <molecule id="Q6ISS4-2"/>
    <property type="protein sequence ID" value="ENSP00000301203.2"/>
    <property type="gene ID" value="ENSG00000167618.10"/>
</dbReference>
<dbReference type="Ensembl" id="ENST00000612901.4">
    <molecule id="Q6ISS4-1"/>
    <property type="protein sequence ID" value="ENSP00000478193.1"/>
    <property type="gene ID" value="ENSG00000274084.4"/>
</dbReference>
<dbReference type="Ensembl" id="ENST00000620256.4">
    <molecule id="Q6ISS4-2"/>
    <property type="protein sequence ID" value="ENSP00000477747.1"/>
    <property type="gene ID" value="ENSG00000274084.4"/>
</dbReference>
<dbReference type="Ensembl" id="ENST00000621280.1">
    <molecule id="Q6ISS4-2"/>
    <property type="protein sequence ID" value="ENSP00000480904.1"/>
    <property type="gene ID" value="ENSG00000277335.4"/>
</dbReference>
<dbReference type="Ensembl" id="ENST00000622556.4">
    <molecule id="Q6ISS4-1"/>
    <property type="protein sequence ID" value="ENSP00000477535.1"/>
    <property type="gene ID" value="ENSG00000277335.4"/>
</dbReference>
<dbReference type="GeneID" id="3904"/>
<dbReference type="KEGG" id="hsa:3904"/>
<dbReference type="MANE-Select" id="ENST00000301202.7">
    <property type="protein sequence ID" value="ENSP00000301202.2"/>
    <property type="RefSeq nucleotide sequence ID" value="NM_002288.6"/>
    <property type="RefSeq protein sequence ID" value="NP_002279.2"/>
</dbReference>
<dbReference type="UCSC" id="uc002qgc.4">
    <molecule id="Q6ISS4-1"/>
    <property type="organism name" value="human"/>
</dbReference>
<dbReference type="AGR" id="HGNC:6478"/>
<dbReference type="CTD" id="3904"/>
<dbReference type="DisGeNET" id="3904"/>
<dbReference type="GeneCards" id="LAIR2"/>
<dbReference type="HGNC" id="HGNC:6478">
    <property type="gene designation" value="LAIR2"/>
</dbReference>
<dbReference type="HPA" id="ENSG00000167618">
    <property type="expression patterns" value="Tissue enhanced (lymphoid tissue, pituitary gland)"/>
</dbReference>
<dbReference type="MIM" id="602993">
    <property type="type" value="gene"/>
</dbReference>
<dbReference type="neXtProt" id="NX_Q6ISS4"/>
<dbReference type="OpenTargets" id="ENSG00000167618"/>
<dbReference type="PharmGKB" id="PA30267"/>
<dbReference type="VEuPathDB" id="HostDB:ENSG00000167618"/>
<dbReference type="eggNOG" id="ENOG502TBGD">
    <property type="taxonomic scope" value="Eukaryota"/>
</dbReference>
<dbReference type="GeneTree" id="ENSGT01100000263478"/>
<dbReference type="HOGENOM" id="CLU_021100_7_1_1"/>
<dbReference type="InParanoid" id="Q6ISS4"/>
<dbReference type="OMA" id="SPVTFHC"/>
<dbReference type="OrthoDB" id="9838250at2759"/>
<dbReference type="PAN-GO" id="Q6ISS4">
    <property type="GO annotations" value="1 GO annotation based on evolutionary models"/>
</dbReference>
<dbReference type="PhylomeDB" id="Q6ISS4"/>
<dbReference type="TreeFam" id="TF336644"/>
<dbReference type="PathwayCommons" id="Q6ISS4"/>
<dbReference type="Reactome" id="R-HSA-198933">
    <property type="pathway name" value="Immunoregulatory interactions between a Lymphoid and a non-Lymphoid cell"/>
</dbReference>
<dbReference type="SignaLink" id="Q6ISS4"/>
<dbReference type="BioGRID-ORCS" id="3904">
    <property type="hits" value="13 hits in 1047 CRISPR screens"/>
</dbReference>
<dbReference type="GeneWiki" id="LAIR2"/>
<dbReference type="GenomeRNAi" id="3904"/>
<dbReference type="Pharos" id="Q6ISS4">
    <property type="development level" value="Tbio"/>
</dbReference>
<dbReference type="PRO" id="PR:Q6ISS4"/>
<dbReference type="Proteomes" id="UP000005640">
    <property type="component" value="Chromosome 19"/>
</dbReference>
<dbReference type="RNAct" id="Q6ISS4">
    <property type="molecule type" value="protein"/>
</dbReference>
<dbReference type="Bgee" id="ENSG00000167618">
    <property type="expression patterns" value="Expressed in granulocyte and 92 other cell types or tissues"/>
</dbReference>
<dbReference type="ExpressionAtlas" id="Q6ISS4">
    <property type="expression patterns" value="baseline and differential"/>
</dbReference>
<dbReference type="GO" id="GO:0005576">
    <property type="term" value="C:extracellular region"/>
    <property type="evidence" value="ECO:0000304"/>
    <property type="project" value="Reactome"/>
</dbReference>
<dbReference type="GO" id="GO:0005886">
    <property type="term" value="C:plasma membrane"/>
    <property type="evidence" value="ECO:0000318"/>
    <property type="project" value="GO_Central"/>
</dbReference>
<dbReference type="GO" id="GO:0002764">
    <property type="term" value="P:immune response-regulating signaling pathway"/>
    <property type="evidence" value="ECO:0000318"/>
    <property type="project" value="GO_Central"/>
</dbReference>
<dbReference type="FunFam" id="2.60.40.10:FF:000049">
    <property type="entry name" value="Leukocyte immunoglobulin-like receptor subfamily B member 1"/>
    <property type="match status" value="1"/>
</dbReference>
<dbReference type="Gene3D" id="2.60.40.10">
    <property type="entry name" value="Immunoglobulins"/>
    <property type="match status" value="1"/>
</dbReference>
<dbReference type="InterPro" id="IPR036179">
    <property type="entry name" value="Ig-like_dom_sf"/>
</dbReference>
<dbReference type="InterPro" id="IPR013783">
    <property type="entry name" value="Ig-like_fold"/>
</dbReference>
<dbReference type="InterPro" id="IPR050412">
    <property type="entry name" value="Ig-like_Receptors_ImmuneReg"/>
</dbReference>
<dbReference type="InterPro" id="IPR003599">
    <property type="entry name" value="Ig_sub"/>
</dbReference>
<dbReference type="PANTHER" id="PTHR11738:SF190">
    <property type="entry name" value="LEUKOCYTE-ASSOCIATED IMMUNOGLOBULIN-LIKE RECEPTOR 2"/>
    <property type="match status" value="1"/>
</dbReference>
<dbReference type="PANTHER" id="PTHR11738">
    <property type="entry name" value="MHC CLASS I NK CELL RECEPTOR"/>
    <property type="match status" value="1"/>
</dbReference>
<dbReference type="Pfam" id="PF13895">
    <property type="entry name" value="Ig_2"/>
    <property type="match status" value="1"/>
</dbReference>
<dbReference type="SMART" id="SM00409">
    <property type="entry name" value="IG"/>
    <property type="match status" value="1"/>
</dbReference>
<dbReference type="SUPFAM" id="SSF48726">
    <property type="entry name" value="Immunoglobulin"/>
    <property type="match status" value="1"/>
</dbReference>
<evidence type="ECO:0000250" key="1"/>
<evidence type="ECO:0000255" key="2"/>
<evidence type="ECO:0000256" key="3">
    <source>
        <dbReference type="SAM" id="MobiDB-lite"/>
    </source>
</evidence>
<evidence type="ECO:0000303" key="4">
    <source>
    </source>
</evidence>
<sequence>MSPHLTALLGLVLCLAQTIHTQEGALPRPSISAEPGTVISPGSHVTFMCRGPVGVQTFRLEREDRAKYKDSYNVFRLGPSESEARFHIDSVSEGNAGLYRCLYYKPPGWSEHSDFLELLVKESSGGPDSPDTEPGSSAGTVPGTEASGFDAP</sequence>
<keyword id="KW-0025">Alternative splicing</keyword>
<keyword id="KW-1015">Disulfide bond</keyword>
<keyword id="KW-0393">Immunoglobulin domain</keyword>
<keyword id="KW-1267">Proteomics identification</keyword>
<keyword id="KW-0675">Receptor</keyword>
<keyword id="KW-1185">Reference proteome</keyword>
<keyword id="KW-0964">Secreted</keyword>
<keyword id="KW-0732">Signal</keyword>
<gene>
    <name type="primary">LAIR2</name>
    <name type="synonym">CD306</name>
</gene>
<name>LAIR2_HUMAN</name>
<feature type="signal peptide" evidence="2">
    <location>
        <begin position="1"/>
        <end position="21"/>
    </location>
</feature>
<feature type="chain" id="PRO_0000250685" description="Leukocyte-associated immunoglobulin-like receptor 2">
    <location>
        <begin position="22"/>
        <end position="152"/>
    </location>
</feature>
<feature type="domain" description="Ig-like C2-type">
    <location>
        <begin position="29"/>
        <end position="117"/>
    </location>
</feature>
<feature type="region of interest" description="Disordered" evidence="3">
    <location>
        <begin position="120"/>
        <end position="152"/>
    </location>
</feature>
<feature type="disulfide bond" evidence="1">
    <location>
        <begin position="49"/>
        <end position="101"/>
    </location>
</feature>
<feature type="splice variant" id="VSP_020720" description="In isoform 2." evidence="4">
    <location>
        <begin position="122"/>
        <end position="138"/>
    </location>
</feature>
<feature type="sequence variant" id="VAR_049882" description="In dbSNP:rs36121405.">
    <original>G</original>
    <variation>S</variation>
    <location>
        <position position="78"/>
    </location>
</feature>
<feature type="sequence variant" id="VAR_049883" description="In dbSNP:rs34423078.">
    <original>H</original>
    <variation>R</variation>
    <location>
        <position position="87"/>
    </location>
</feature>
<feature type="sequence variant" id="VAR_049884" description="In dbSNP:rs34429135.">
    <original>F</original>
    <variation>Y</variation>
    <location>
        <position position="115"/>
    </location>
</feature>
<protein>
    <recommendedName>
        <fullName>Leukocyte-associated immunoglobulin-like receptor 2</fullName>
        <shortName>LAIR-2</shortName>
    </recommendedName>
    <cdAntigenName>CD306</cdAntigenName>
</protein>
<reference key="1">
    <citation type="journal article" date="1997" name="Immunity">
        <title>LAIR-1, a novel inhibitory receptor expressed on human mononuclear leukocytes.</title>
        <authorList>
            <person name="Meyaard L."/>
            <person name="Adema G.J."/>
            <person name="Chang C."/>
            <person name="Woollatt E."/>
            <person name="Sutherland G.R."/>
            <person name="Lanier L.L."/>
            <person name="Phillips J.H."/>
        </authorList>
    </citation>
    <scope>NUCLEOTIDE SEQUENCE [MRNA] (ISOFORM 2)</scope>
</reference>
<reference key="2">
    <citation type="journal article" date="1999" name="J. Immunol.">
        <title>Leukocyte-associated Ig-like receptor-1 functions as an inhibitory receptor on cytotoxic T cells.</title>
        <authorList>
            <person name="Meyaard L."/>
            <person name="Hurenkamp J."/>
            <person name="Clevers H."/>
            <person name="Lanier L.L."/>
            <person name="Phillips J.H."/>
        </authorList>
    </citation>
    <scope>NUCLEOTIDE SEQUENCE [MRNA] (ISOFORM 1)</scope>
</reference>
<reference key="3">
    <citation type="journal article" date="2004" name="Genome Res.">
        <title>The status, quality, and expansion of the NIH full-length cDNA project: the Mammalian Gene Collection (MGC).</title>
        <authorList>
            <consortium name="The MGC Project Team"/>
        </authorList>
    </citation>
    <scope>NUCLEOTIDE SEQUENCE [LARGE SCALE MRNA] (ISOFORM 1)</scope>
</reference>
<comment type="interaction">
    <interactant intactId="EBI-10250491">
        <id>Q6ISS4</id>
    </interactant>
    <interactant intactId="EBI-744586">
        <id>Q9Y6C2</id>
        <label>EMILIN1</label>
    </interactant>
    <organismsDiffer>false</organismsDiffer>
    <experiments>3</experiments>
</comment>
<comment type="interaction">
    <interactant intactId="EBI-10250491">
        <id>Q6ISS4</id>
    </interactant>
    <interactant intactId="EBI-11748557">
        <id>Q9Y6C2-2</id>
        <label>EMILIN1</label>
    </interactant>
    <organismsDiffer>false</organismsDiffer>
    <experiments>3</experiments>
</comment>
<comment type="interaction">
    <interactant intactId="EBI-10250491">
        <id>Q6ISS4</id>
    </interactant>
    <interactant intactId="EBI-11911016">
        <id>P80188</id>
        <label>LCN2</label>
    </interactant>
    <organismsDiffer>false</organismsDiffer>
    <experiments>3</experiments>
</comment>
<comment type="interaction">
    <interactant intactId="EBI-10250491">
        <id>Q6ISS4</id>
    </interactant>
    <interactant intactId="EBI-347996">
        <id>O43765</id>
        <label>SGTA</label>
    </interactant>
    <organismsDiffer>false</organismsDiffer>
    <experiments>6</experiments>
</comment>
<comment type="interaction">
    <interactant intactId="EBI-10250491">
        <id>Q6ISS4</id>
    </interactant>
    <interactant intactId="EBI-741480">
        <id>Q9UMX0</id>
        <label>UBQLN1</label>
    </interactant>
    <organismsDiffer>false</organismsDiffer>
    <experiments>3</experiments>
</comment>
<comment type="interaction">
    <interactant intactId="EBI-10250491">
        <id>Q6ISS4</id>
    </interactant>
    <interactant intactId="EBI-947187">
        <id>Q9UHD9</id>
        <label>UBQLN2</label>
    </interactant>
    <organismsDiffer>false</organismsDiffer>
    <experiments>3</experiments>
</comment>
<comment type="subcellular location">
    <subcellularLocation>
        <location>Secreted</location>
    </subcellularLocation>
</comment>
<comment type="alternative products">
    <event type="alternative splicing"/>
    <isoform>
        <id>Q6ISS4-1</id>
        <name>1</name>
        <name>LAIR-2a</name>
        <sequence type="displayed"/>
    </isoform>
    <isoform>
        <id>Q6ISS4-2</id>
        <name>2</name>
        <name>LAIR-2b</name>
        <sequence type="described" ref="VSP_020720"/>
    </isoform>
</comment>
<organism>
    <name type="scientific">Homo sapiens</name>
    <name type="common">Human</name>
    <dbReference type="NCBI Taxonomy" id="9606"/>
    <lineage>
        <taxon>Eukaryota</taxon>
        <taxon>Metazoa</taxon>
        <taxon>Chordata</taxon>
        <taxon>Craniata</taxon>
        <taxon>Vertebrata</taxon>
        <taxon>Euteleostomi</taxon>
        <taxon>Mammalia</taxon>
        <taxon>Eutheria</taxon>
        <taxon>Euarchontoglires</taxon>
        <taxon>Primates</taxon>
        <taxon>Haplorrhini</taxon>
        <taxon>Catarrhini</taxon>
        <taxon>Hominidae</taxon>
        <taxon>Homo</taxon>
    </lineage>
</organism>